<feature type="chain" id="PRO_1000196572" description="Ribosome maturation factor RimM">
    <location>
        <begin position="1"/>
        <end position="172"/>
    </location>
</feature>
<feature type="domain" description="PRC barrel" evidence="1">
    <location>
        <begin position="95"/>
        <end position="168"/>
    </location>
</feature>
<reference key="1">
    <citation type="journal article" date="2010" name="Genome Biol.">
        <title>Structure and dynamics of the pan-genome of Streptococcus pneumoniae and closely related species.</title>
        <authorList>
            <person name="Donati C."/>
            <person name="Hiller N.L."/>
            <person name="Tettelin H."/>
            <person name="Muzzi A."/>
            <person name="Croucher N.J."/>
            <person name="Angiuoli S.V."/>
            <person name="Oggioni M."/>
            <person name="Dunning Hotopp J.C."/>
            <person name="Hu F.Z."/>
            <person name="Riley D.R."/>
            <person name="Covacci A."/>
            <person name="Mitchell T.J."/>
            <person name="Bentley S.D."/>
            <person name="Kilian M."/>
            <person name="Ehrlich G.D."/>
            <person name="Rappuoli R."/>
            <person name="Moxon E.R."/>
            <person name="Masignani V."/>
        </authorList>
    </citation>
    <scope>NUCLEOTIDE SEQUENCE [LARGE SCALE GENOMIC DNA]</scope>
    <source>
        <strain>70585</strain>
    </source>
</reference>
<proteinExistence type="inferred from homology"/>
<name>RIMM_STRP7</name>
<sequence length="172" mass="19817">MNYFNVGKIVNTQGLQGEMRVLSVTDFAEERFKKGAELALFDEKDQFVQTVTIASHRKQKNFDIIKFKDMYHINTIEKYKGYSLKVAEEDLNDLDDGEFYYHEIIGLEVYEGDSLVGTIKEILQPGANDVWVVKRKGKRDLLLPYIPPVVLNVDIPNKRVDVEILEGLDDED</sequence>
<protein>
    <recommendedName>
        <fullName evidence="1">Ribosome maturation factor RimM</fullName>
    </recommendedName>
</protein>
<keyword id="KW-0143">Chaperone</keyword>
<keyword id="KW-0963">Cytoplasm</keyword>
<keyword id="KW-0690">Ribosome biogenesis</keyword>
<keyword id="KW-0698">rRNA processing</keyword>
<gene>
    <name evidence="1" type="primary">rimM</name>
    <name type="ordered locus">SP70585_0820</name>
</gene>
<organism>
    <name type="scientific">Streptococcus pneumoniae (strain 70585)</name>
    <dbReference type="NCBI Taxonomy" id="488221"/>
    <lineage>
        <taxon>Bacteria</taxon>
        <taxon>Bacillati</taxon>
        <taxon>Bacillota</taxon>
        <taxon>Bacilli</taxon>
        <taxon>Lactobacillales</taxon>
        <taxon>Streptococcaceae</taxon>
        <taxon>Streptococcus</taxon>
    </lineage>
</organism>
<evidence type="ECO:0000255" key="1">
    <source>
        <dbReference type="HAMAP-Rule" id="MF_00014"/>
    </source>
</evidence>
<dbReference type="EMBL" id="CP000918">
    <property type="protein sequence ID" value="ACO17061.1"/>
    <property type="molecule type" value="Genomic_DNA"/>
</dbReference>
<dbReference type="RefSeq" id="WP_001105899.1">
    <property type="nucleotide sequence ID" value="NC_012468.1"/>
</dbReference>
<dbReference type="SMR" id="C1C6B9"/>
<dbReference type="GeneID" id="45653851"/>
<dbReference type="KEGG" id="snm:SP70585_0820"/>
<dbReference type="HOGENOM" id="CLU_077636_3_1_9"/>
<dbReference type="Proteomes" id="UP000002211">
    <property type="component" value="Chromosome"/>
</dbReference>
<dbReference type="GO" id="GO:0005737">
    <property type="term" value="C:cytoplasm"/>
    <property type="evidence" value="ECO:0007669"/>
    <property type="project" value="UniProtKB-SubCell"/>
</dbReference>
<dbReference type="GO" id="GO:0005840">
    <property type="term" value="C:ribosome"/>
    <property type="evidence" value="ECO:0007669"/>
    <property type="project" value="InterPro"/>
</dbReference>
<dbReference type="GO" id="GO:0043022">
    <property type="term" value="F:ribosome binding"/>
    <property type="evidence" value="ECO:0007669"/>
    <property type="project" value="InterPro"/>
</dbReference>
<dbReference type="GO" id="GO:0042274">
    <property type="term" value="P:ribosomal small subunit biogenesis"/>
    <property type="evidence" value="ECO:0007669"/>
    <property type="project" value="UniProtKB-UniRule"/>
</dbReference>
<dbReference type="GO" id="GO:0006364">
    <property type="term" value="P:rRNA processing"/>
    <property type="evidence" value="ECO:0007669"/>
    <property type="project" value="UniProtKB-UniRule"/>
</dbReference>
<dbReference type="Gene3D" id="2.30.30.240">
    <property type="entry name" value="PRC-barrel domain"/>
    <property type="match status" value="1"/>
</dbReference>
<dbReference type="Gene3D" id="2.40.30.60">
    <property type="entry name" value="RimM"/>
    <property type="match status" value="1"/>
</dbReference>
<dbReference type="HAMAP" id="MF_00014">
    <property type="entry name" value="Ribosome_mat_RimM"/>
    <property type="match status" value="1"/>
</dbReference>
<dbReference type="InterPro" id="IPR027275">
    <property type="entry name" value="PRC-brl_dom"/>
</dbReference>
<dbReference type="InterPro" id="IPR011033">
    <property type="entry name" value="PRC_barrel-like_sf"/>
</dbReference>
<dbReference type="InterPro" id="IPR011961">
    <property type="entry name" value="RimM"/>
</dbReference>
<dbReference type="InterPro" id="IPR002676">
    <property type="entry name" value="RimM_N"/>
</dbReference>
<dbReference type="InterPro" id="IPR036976">
    <property type="entry name" value="RimM_N_sf"/>
</dbReference>
<dbReference type="InterPro" id="IPR009000">
    <property type="entry name" value="Transl_B-barrel_sf"/>
</dbReference>
<dbReference type="NCBIfam" id="TIGR02273">
    <property type="entry name" value="16S_RimM"/>
    <property type="match status" value="1"/>
</dbReference>
<dbReference type="PANTHER" id="PTHR33692">
    <property type="entry name" value="RIBOSOME MATURATION FACTOR RIMM"/>
    <property type="match status" value="1"/>
</dbReference>
<dbReference type="PANTHER" id="PTHR33692:SF1">
    <property type="entry name" value="RIBOSOME MATURATION FACTOR RIMM"/>
    <property type="match status" value="1"/>
</dbReference>
<dbReference type="Pfam" id="PF05239">
    <property type="entry name" value="PRC"/>
    <property type="match status" value="1"/>
</dbReference>
<dbReference type="Pfam" id="PF01782">
    <property type="entry name" value="RimM"/>
    <property type="match status" value="1"/>
</dbReference>
<dbReference type="SUPFAM" id="SSF50346">
    <property type="entry name" value="PRC-barrel domain"/>
    <property type="match status" value="1"/>
</dbReference>
<dbReference type="SUPFAM" id="SSF50447">
    <property type="entry name" value="Translation proteins"/>
    <property type="match status" value="1"/>
</dbReference>
<accession>C1C6B9</accession>
<comment type="function">
    <text evidence="1">An accessory protein needed during the final step in the assembly of 30S ribosomal subunit, possibly for assembly of the head region. Essential for efficient processing of 16S rRNA. May be needed both before and after RbfA during the maturation of 16S rRNA. It has affinity for free ribosomal 30S subunits but not for 70S ribosomes.</text>
</comment>
<comment type="subunit">
    <text evidence="1">Binds ribosomal protein uS19.</text>
</comment>
<comment type="subcellular location">
    <subcellularLocation>
        <location evidence="1">Cytoplasm</location>
    </subcellularLocation>
</comment>
<comment type="domain">
    <text evidence="1">The PRC barrel domain binds ribosomal protein uS19.</text>
</comment>
<comment type="similarity">
    <text evidence="1">Belongs to the RimM family.</text>
</comment>